<feature type="chain" id="PRO_1000199833" description="Ribosomal RNA large subunit methyltransferase H">
    <location>
        <begin position="1"/>
        <end position="159"/>
    </location>
</feature>
<feature type="binding site" evidence="1">
    <location>
        <position position="76"/>
    </location>
    <ligand>
        <name>S-adenosyl-L-methionine</name>
        <dbReference type="ChEBI" id="CHEBI:59789"/>
    </ligand>
</feature>
<feature type="binding site" evidence="1">
    <location>
        <position position="108"/>
    </location>
    <ligand>
        <name>S-adenosyl-L-methionine</name>
        <dbReference type="ChEBI" id="CHEBI:59789"/>
    </ligand>
</feature>
<feature type="binding site" evidence="1">
    <location>
        <begin position="127"/>
        <end position="132"/>
    </location>
    <ligand>
        <name>S-adenosyl-L-methionine</name>
        <dbReference type="ChEBI" id="CHEBI:59789"/>
    </ligand>
</feature>
<evidence type="ECO:0000255" key="1">
    <source>
        <dbReference type="HAMAP-Rule" id="MF_00658"/>
    </source>
</evidence>
<sequence>MKIKVVTVGKLKEKYLKDGIAEYSKRISRFAKFEMIELSDEKTPDKASESENQKILEIEGQRILSKIADRDFVIVLAIEGKTFFSEEFSKQLEETSIKGFSTLTFIIGGSLGLSSSVKNRANLSVSFGRLTLPHQLMRLVLVEQIYRAFTIQQGFPYHK</sequence>
<keyword id="KW-0963">Cytoplasm</keyword>
<keyword id="KW-0489">Methyltransferase</keyword>
<keyword id="KW-0698">rRNA processing</keyword>
<keyword id="KW-0949">S-adenosyl-L-methionine</keyword>
<keyword id="KW-0808">Transferase</keyword>
<protein>
    <recommendedName>
        <fullName evidence="1">Ribosomal RNA large subunit methyltransferase H</fullName>
        <ecNumber evidence="1">2.1.1.177</ecNumber>
    </recommendedName>
    <alternativeName>
        <fullName evidence="1">23S rRNA (pseudouridine1915-N3)-methyltransferase</fullName>
    </alternativeName>
    <alternativeName>
        <fullName evidence="1">23S rRNA m3Psi1915 methyltransferase</fullName>
    </alternativeName>
    <alternativeName>
        <fullName evidence="1">rRNA (pseudouridine-N3-)-methyltransferase RlmH</fullName>
    </alternativeName>
</protein>
<proteinExistence type="inferred from homology"/>
<gene>
    <name evidence="1" type="primary">rlmH</name>
    <name type="ordered locus">SPJ_2268</name>
</gene>
<organism>
    <name type="scientific">Streptococcus pneumoniae (strain JJA)</name>
    <dbReference type="NCBI Taxonomy" id="488222"/>
    <lineage>
        <taxon>Bacteria</taxon>
        <taxon>Bacillati</taxon>
        <taxon>Bacillota</taxon>
        <taxon>Bacilli</taxon>
        <taxon>Lactobacillales</taxon>
        <taxon>Streptococcaceae</taxon>
        <taxon>Streptococcus</taxon>
    </lineage>
</organism>
<accession>C1CHN8</accession>
<dbReference type="EC" id="2.1.1.177" evidence="1"/>
<dbReference type="EMBL" id="CP000919">
    <property type="protein sequence ID" value="ACO19935.1"/>
    <property type="molecule type" value="Genomic_DNA"/>
</dbReference>
<dbReference type="RefSeq" id="WP_000695929.1">
    <property type="nucleotide sequence ID" value="NC_012466.1"/>
</dbReference>
<dbReference type="SMR" id="C1CHN8"/>
<dbReference type="GeneID" id="45652538"/>
<dbReference type="KEGG" id="sjj:SPJ_2268"/>
<dbReference type="HOGENOM" id="CLU_100552_0_0_9"/>
<dbReference type="Proteomes" id="UP000002206">
    <property type="component" value="Chromosome"/>
</dbReference>
<dbReference type="GO" id="GO:0005737">
    <property type="term" value="C:cytoplasm"/>
    <property type="evidence" value="ECO:0007669"/>
    <property type="project" value="UniProtKB-SubCell"/>
</dbReference>
<dbReference type="GO" id="GO:0070038">
    <property type="term" value="F:rRNA (pseudouridine-N3-)-methyltransferase activity"/>
    <property type="evidence" value="ECO:0007669"/>
    <property type="project" value="UniProtKB-UniRule"/>
</dbReference>
<dbReference type="CDD" id="cd18081">
    <property type="entry name" value="RlmH-like"/>
    <property type="match status" value="1"/>
</dbReference>
<dbReference type="Gene3D" id="3.40.1280.10">
    <property type="match status" value="1"/>
</dbReference>
<dbReference type="HAMAP" id="MF_00658">
    <property type="entry name" value="23SrRNA_methyltr_H"/>
    <property type="match status" value="1"/>
</dbReference>
<dbReference type="InterPro" id="IPR029028">
    <property type="entry name" value="Alpha/beta_knot_MTases"/>
</dbReference>
<dbReference type="InterPro" id="IPR003742">
    <property type="entry name" value="RlmH-like"/>
</dbReference>
<dbReference type="InterPro" id="IPR029026">
    <property type="entry name" value="tRNA_m1G_MTases_N"/>
</dbReference>
<dbReference type="NCBIfam" id="NF000985">
    <property type="entry name" value="PRK00103.1-3"/>
    <property type="match status" value="1"/>
</dbReference>
<dbReference type="NCBIfam" id="TIGR00246">
    <property type="entry name" value="tRNA_RlmH_YbeA"/>
    <property type="match status" value="1"/>
</dbReference>
<dbReference type="PANTHER" id="PTHR33603">
    <property type="entry name" value="METHYLTRANSFERASE"/>
    <property type="match status" value="1"/>
</dbReference>
<dbReference type="PANTHER" id="PTHR33603:SF1">
    <property type="entry name" value="RIBOSOMAL RNA LARGE SUBUNIT METHYLTRANSFERASE H"/>
    <property type="match status" value="1"/>
</dbReference>
<dbReference type="Pfam" id="PF02590">
    <property type="entry name" value="SPOUT_MTase"/>
    <property type="match status" value="1"/>
</dbReference>
<dbReference type="PIRSF" id="PIRSF004505">
    <property type="entry name" value="MT_bac"/>
    <property type="match status" value="1"/>
</dbReference>
<dbReference type="SUPFAM" id="SSF75217">
    <property type="entry name" value="alpha/beta knot"/>
    <property type="match status" value="1"/>
</dbReference>
<reference key="1">
    <citation type="journal article" date="2010" name="Genome Biol.">
        <title>Structure and dynamics of the pan-genome of Streptococcus pneumoniae and closely related species.</title>
        <authorList>
            <person name="Donati C."/>
            <person name="Hiller N.L."/>
            <person name="Tettelin H."/>
            <person name="Muzzi A."/>
            <person name="Croucher N.J."/>
            <person name="Angiuoli S.V."/>
            <person name="Oggioni M."/>
            <person name="Dunning Hotopp J.C."/>
            <person name="Hu F.Z."/>
            <person name="Riley D.R."/>
            <person name="Covacci A."/>
            <person name="Mitchell T.J."/>
            <person name="Bentley S.D."/>
            <person name="Kilian M."/>
            <person name="Ehrlich G.D."/>
            <person name="Rappuoli R."/>
            <person name="Moxon E.R."/>
            <person name="Masignani V."/>
        </authorList>
    </citation>
    <scope>NUCLEOTIDE SEQUENCE [LARGE SCALE GENOMIC DNA]</scope>
    <source>
        <strain>JJA</strain>
    </source>
</reference>
<comment type="function">
    <text evidence="1">Specifically methylates the pseudouridine at position 1915 (m3Psi1915) in 23S rRNA.</text>
</comment>
<comment type="catalytic activity">
    <reaction evidence="1">
        <text>pseudouridine(1915) in 23S rRNA + S-adenosyl-L-methionine = N(3)-methylpseudouridine(1915) in 23S rRNA + S-adenosyl-L-homocysteine + H(+)</text>
        <dbReference type="Rhea" id="RHEA:42752"/>
        <dbReference type="Rhea" id="RHEA-COMP:10221"/>
        <dbReference type="Rhea" id="RHEA-COMP:10222"/>
        <dbReference type="ChEBI" id="CHEBI:15378"/>
        <dbReference type="ChEBI" id="CHEBI:57856"/>
        <dbReference type="ChEBI" id="CHEBI:59789"/>
        <dbReference type="ChEBI" id="CHEBI:65314"/>
        <dbReference type="ChEBI" id="CHEBI:74486"/>
        <dbReference type="EC" id="2.1.1.177"/>
    </reaction>
</comment>
<comment type="subunit">
    <text evidence="1">Homodimer.</text>
</comment>
<comment type="subcellular location">
    <subcellularLocation>
        <location evidence="1">Cytoplasm</location>
    </subcellularLocation>
</comment>
<comment type="similarity">
    <text evidence="1">Belongs to the RNA methyltransferase RlmH family.</text>
</comment>
<name>RLMH_STRZJ</name>